<reference key="1">
    <citation type="submission" date="2005-03" db="EMBL/GenBank/DDBJ databases">
        <title>Rhesus neuropeptide S receptor nucleotide and deduced amino acid sequence.</title>
        <authorList>
            <person name="Uebele V.N."/>
        </authorList>
    </citation>
    <scope>NUCLEOTIDE SEQUENCE [MRNA]</scope>
</reference>
<name>NPSR1_MACMU</name>
<dbReference type="EMBL" id="AY950595">
    <property type="protein sequence ID" value="AAX47273.1"/>
    <property type="molecule type" value="mRNA"/>
</dbReference>
<dbReference type="EMBL" id="AY956445">
    <property type="protein sequence ID" value="AAX63743.1"/>
    <property type="molecule type" value="mRNA"/>
</dbReference>
<dbReference type="RefSeq" id="NP_001028114.1">
    <property type="nucleotide sequence ID" value="NM_001032942.1"/>
</dbReference>
<dbReference type="SMR" id="Q56H79"/>
<dbReference type="FunCoup" id="Q56H79">
    <property type="interactions" value="499"/>
</dbReference>
<dbReference type="STRING" id="9544.ENSMMUP00000035214"/>
<dbReference type="GlyCosmos" id="Q56H79">
    <property type="glycosylation" value="2 sites, No reported glycans"/>
</dbReference>
<dbReference type="PaxDb" id="9544-ENSMMUP00000018684"/>
<dbReference type="GeneID" id="574355"/>
<dbReference type="KEGG" id="mcc:574355"/>
<dbReference type="CTD" id="387129"/>
<dbReference type="eggNOG" id="KOG3184">
    <property type="taxonomic scope" value="Eukaryota"/>
</dbReference>
<dbReference type="eggNOG" id="KOG3656">
    <property type="taxonomic scope" value="Eukaryota"/>
</dbReference>
<dbReference type="InParanoid" id="Q56H79"/>
<dbReference type="OrthoDB" id="5987909at2759"/>
<dbReference type="Proteomes" id="UP000006718">
    <property type="component" value="Unassembled WGS sequence"/>
</dbReference>
<dbReference type="GO" id="GO:0005886">
    <property type="term" value="C:plasma membrane"/>
    <property type="evidence" value="ECO:0000250"/>
    <property type="project" value="UniProtKB"/>
</dbReference>
<dbReference type="GO" id="GO:0008188">
    <property type="term" value="F:neuropeptide receptor activity"/>
    <property type="evidence" value="ECO:0000250"/>
    <property type="project" value="UniProtKB"/>
</dbReference>
<dbReference type="GO" id="GO:0005000">
    <property type="term" value="F:vasopressin receptor activity"/>
    <property type="evidence" value="ECO:0007669"/>
    <property type="project" value="InterPro"/>
</dbReference>
<dbReference type="GO" id="GO:0007218">
    <property type="term" value="P:neuropeptide signaling pathway"/>
    <property type="evidence" value="ECO:0000250"/>
    <property type="project" value="UniProtKB"/>
</dbReference>
<dbReference type="GO" id="GO:0051281">
    <property type="term" value="P:positive regulation of release of sequestered calcium ion into cytosol"/>
    <property type="evidence" value="ECO:0000250"/>
    <property type="project" value="UniProtKB"/>
</dbReference>
<dbReference type="CDD" id="cd15197">
    <property type="entry name" value="7tmA_NPSR"/>
    <property type="match status" value="1"/>
</dbReference>
<dbReference type="FunFam" id="1.20.1070.10:FF:000188">
    <property type="entry name" value="Neuropeptide S receptor"/>
    <property type="match status" value="1"/>
</dbReference>
<dbReference type="Gene3D" id="1.20.1070.10">
    <property type="entry name" value="Rhodopsin 7-helix transmembrane proteins"/>
    <property type="match status" value="1"/>
</dbReference>
<dbReference type="InterPro" id="IPR000276">
    <property type="entry name" value="GPCR_Rhodpsn"/>
</dbReference>
<dbReference type="InterPro" id="IPR017452">
    <property type="entry name" value="GPCR_Rhodpsn_7TM"/>
</dbReference>
<dbReference type="InterPro" id="IPR027294">
    <property type="entry name" value="NPS_rcpt"/>
</dbReference>
<dbReference type="InterPro" id="IPR001817">
    <property type="entry name" value="Vasoprsn_rcpt"/>
</dbReference>
<dbReference type="PANTHER" id="PTHR24244">
    <property type="entry name" value="NEUROPEPTIDE S RECEPTOR"/>
    <property type="match status" value="1"/>
</dbReference>
<dbReference type="PANTHER" id="PTHR24244:SF2">
    <property type="entry name" value="NEUROPEPTIDE S RECEPTOR"/>
    <property type="match status" value="1"/>
</dbReference>
<dbReference type="Pfam" id="PF00001">
    <property type="entry name" value="7tm_1"/>
    <property type="match status" value="1"/>
</dbReference>
<dbReference type="PRINTS" id="PR00237">
    <property type="entry name" value="GPCRRHODOPSN"/>
</dbReference>
<dbReference type="PRINTS" id="PR00896">
    <property type="entry name" value="VASOPRESSINR"/>
</dbReference>
<dbReference type="SUPFAM" id="SSF81321">
    <property type="entry name" value="Family A G protein-coupled receptor-like"/>
    <property type="match status" value="1"/>
</dbReference>
<dbReference type="PROSITE" id="PS00237">
    <property type="entry name" value="G_PROTEIN_RECEP_F1_1"/>
    <property type="match status" value="1"/>
</dbReference>
<dbReference type="PROSITE" id="PS50262">
    <property type="entry name" value="G_PROTEIN_RECEP_F1_2"/>
    <property type="match status" value="1"/>
</dbReference>
<feature type="chain" id="PRO_0000069640" description="Neuropeptide S receptor">
    <location>
        <begin position="1"/>
        <end position="371"/>
    </location>
</feature>
<feature type="topological domain" description="Extracellular" evidence="2">
    <location>
        <begin position="1"/>
        <end position="52"/>
    </location>
</feature>
<feature type="transmembrane region" description="Helical; Name=1" evidence="2">
    <location>
        <begin position="53"/>
        <end position="73"/>
    </location>
</feature>
<feature type="topological domain" description="Cytoplasmic" evidence="2">
    <location>
        <begin position="74"/>
        <end position="82"/>
    </location>
</feature>
<feature type="transmembrane region" description="Helical; Name=2" evidence="2">
    <location>
        <begin position="83"/>
        <end position="103"/>
    </location>
</feature>
<feature type="topological domain" description="Extracellular" evidence="2">
    <location>
        <begin position="104"/>
        <end position="123"/>
    </location>
</feature>
<feature type="transmembrane region" description="Helical; Name=3" evidence="2">
    <location>
        <begin position="124"/>
        <end position="144"/>
    </location>
</feature>
<feature type="topological domain" description="Cytoplasmic" evidence="2">
    <location>
        <begin position="145"/>
        <end position="164"/>
    </location>
</feature>
<feature type="transmembrane region" description="Helical; Name=4" evidence="2">
    <location>
        <begin position="165"/>
        <end position="185"/>
    </location>
</feature>
<feature type="topological domain" description="Extracellular" evidence="2">
    <location>
        <begin position="186"/>
        <end position="212"/>
    </location>
</feature>
<feature type="transmembrane region" description="Helical; Name=5" evidence="2">
    <location>
        <begin position="213"/>
        <end position="233"/>
    </location>
</feature>
<feature type="topological domain" description="Cytoplasmic" evidence="2">
    <location>
        <begin position="234"/>
        <end position="275"/>
    </location>
</feature>
<feature type="transmembrane region" description="Helical; Name=6" evidence="2">
    <location>
        <begin position="276"/>
        <end position="296"/>
    </location>
</feature>
<feature type="topological domain" description="Extracellular" evidence="2">
    <location>
        <begin position="297"/>
        <end position="312"/>
    </location>
</feature>
<feature type="transmembrane region" description="Helical; Name=7" evidence="2">
    <location>
        <begin position="313"/>
        <end position="333"/>
    </location>
</feature>
<feature type="topological domain" description="Cytoplasmic" evidence="2">
    <location>
        <begin position="334"/>
        <end position="371"/>
    </location>
</feature>
<feature type="glycosylation site" description="N-linked (GlcNAc...) asparagine" evidence="2">
    <location>
        <position position="4"/>
    </location>
</feature>
<feature type="glycosylation site" description="N-linked (GlcNAc...) asparagine" evidence="2">
    <location>
        <position position="13"/>
    </location>
</feature>
<feature type="disulfide bond" evidence="3">
    <location>
        <begin position="121"/>
        <end position="197"/>
    </location>
</feature>
<feature type="sequence conflict" description="In Ref. 1; AAX47273." evidence="4" ref="1">
    <original>S</original>
    <variation>Y</variation>
    <location>
        <position position="95"/>
    </location>
</feature>
<feature type="sequence conflict" description="In Ref. 1; AAX47273." evidence="4" ref="1">
    <original>V</original>
    <variation>A</variation>
    <location>
        <position position="129"/>
    </location>
</feature>
<feature type="sequence conflict" description="In Ref. 1; AAX47273." evidence="4" ref="1">
    <original>I</original>
    <variation>R</variation>
    <location>
        <position position="350"/>
    </location>
</feature>
<organism>
    <name type="scientific">Macaca mulatta</name>
    <name type="common">Rhesus macaque</name>
    <dbReference type="NCBI Taxonomy" id="9544"/>
    <lineage>
        <taxon>Eukaryota</taxon>
        <taxon>Metazoa</taxon>
        <taxon>Chordata</taxon>
        <taxon>Craniata</taxon>
        <taxon>Vertebrata</taxon>
        <taxon>Euteleostomi</taxon>
        <taxon>Mammalia</taxon>
        <taxon>Eutheria</taxon>
        <taxon>Euarchontoglires</taxon>
        <taxon>Primates</taxon>
        <taxon>Haplorrhini</taxon>
        <taxon>Catarrhini</taxon>
        <taxon>Cercopithecidae</taxon>
        <taxon>Cercopithecinae</taxon>
        <taxon>Macaca</taxon>
    </lineage>
</organism>
<proteinExistence type="evidence at transcript level"/>
<keyword id="KW-1003">Cell membrane</keyword>
<keyword id="KW-1015">Disulfide bond</keyword>
<keyword id="KW-0297">G-protein coupled receptor</keyword>
<keyword id="KW-0325">Glycoprotein</keyword>
<keyword id="KW-0472">Membrane</keyword>
<keyword id="KW-0527">Neuropeptide</keyword>
<keyword id="KW-0675">Receptor</keyword>
<keyword id="KW-1185">Reference proteome</keyword>
<keyword id="KW-0807">Transducer</keyword>
<keyword id="KW-0812">Transmembrane</keyword>
<keyword id="KW-1133">Transmembrane helix</keyword>
<gene>
    <name type="primary">NPSR1</name>
    <name type="synonym">GPR154</name>
</gene>
<protein>
    <recommendedName>
        <fullName>Neuropeptide S receptor</fullName>
    </recommendedName>
    <alternativeName>
        <fullName>G-protein coupled receptor 154</fullName>
    </alternativeName>
</protein>
<evidence type="ECO:0000250" key="1">
    <source>
        <dbReference type="UniProtKB" id="Q6W5P4"/>
    </source>
</evidence>
<evidence type="ECO:0000255" key="2"/>
<evidence type="ECO:0000255" key="3">
    <source>
        <dbReference type="PROSITE-ProRule" id="PRU00521"/>
    </source>
</evidence>
<evidence type="ECO:0000305" key="4"/>
<comment type="function">
    <text evidence="1">G-protein coupled receptor for neuropeptide S (NPS). Promotes mobilization of intracellular Ca(2+) stores. Inhibits cell growth in response to NPS binding. Involved in pathogenesis of asthma and other IgE-mediated diseases.</text>
</comment>
<comment type="subcellular location">
    <subcellularLocation>
        <location evidence="1">Cell membrane</location>
        <topology evidence="1">Multi-pass membrane protein</topology>
    </subcellularLocation>
</comment>
<comment type="similarity">
    <text evidence="3">Belongs to the G-protein coupled receptor 1 family. Vasopressin/oxytocin receptor subfamily.</text>
</comment>
<sequence>MPANFTEGSFDSNGTGQMLDSSPVACTETVTFTEVVEGKEWGSFYYSFKTEQLITLWVLFVFTIVGNSVVLFSTWRRKRKSRMTFFVTQLAITDSFTGLVNILTDIIWRFTGDFMAPDLVCRVVRYLQVVLLYASTYVLVSLSIDRYHAIVYPMKFLQGEKQAKVLIVIAWSLSFLFSIPTLIIFGKRTLSNGEVQCWALWPDDSYWTPYMTIVAFLVYFIPLTIISVMYGIVIRTIWIKSKTYETVISNCSDGKLCSSYNRGLISKAKIKAIKYSIVIILAFICCWSPYFLFDILDNFNLLPDTQERFYASVIIQNLPALNSAINPLIYCVFSSSISFPCGERRSQDSIMTFRERTERHEMQILSKPEFI</sequence>
<accession>Q56H79</accession>
<accession>Q58HF3</accession>